<evidence type="ECO:0000250" key="1"/>
<evidence type="ECO:0000250" key="2">
    <source>
        <dbReference type="UniProtKB" id="P20239"/>
    </source>
</evidence>
<evidence type="ECO:0000250" key="3">
    <source>
        <dbReference type="UniProtKB" id="P21754"/>
    </source>
</evidence>
<evidence type="ECO:0000250" key="4">
    <source>
        <dbReference type="UniProtKB" id="P48833"/>
    </source>
</evidence>
<evidence type="ECO:0000255" key="5"/>
<evidence type="ECO:0000255" key="6">
    <source>
        <dbReference type="PROSITE-ProRule" id="PRU00375"/>
    </source>
</evidence>
<evidence type="ECO:0000305" key="7"/>
<accession>P53785</accession>
<organism>
    <name type="scientific">Macaca radiata</name>
    <name type="common">Bonnet macaque</name>
    <dbReference type="NCBI Taxonomy" id="9548"/>
    <lineage>
        <taxon>Eukaryota</taxon>
        <taxon>Metazoa</taxon>
        <taxon>Chordata</taxon>
        <taxon>Craniata</taxon>
        <taxon>Vertebrata</taxon>
        <taxon>Euteleostomi</taxon>
        <taxon>Mammalia</taxon>
        <taxon>Eutheria</taxon>
        <taxon>Euarchontoglires</taxon>
        <taxon>Primates</taxon>
        <taxon>Haplorrhini</taxon>
        <taxon>Catarrhini</taxon>
        <taxon>Cercopithecidae</taxon>
        <taxon>Cercopithecinae</taxon>
        <taxon>Macaca</taxon>
    </lineage>
</organism>
<proteinExistence type="evidence at transcript level"/>
<feature type="signal peptide" evidence="1">
    <location>
        <begin position="1"/>
        <end position="22"/>
    </location>
</feature>
<feature type="chain" id="PRO_0000041711" description="Zona pellucida sperm-binding protein 3">
    <location>
        <begin position="23"/>
        <end position="350"/>
    </location>
</feature>
<feature type="chain" id="PRO_0000304570" description="Processed zona pellucida sperm-binding protein 3">
    <location>
        <begin position="23"/>
        <end status="unknown"/>
    </location>
</feature>
<feature type="propeptide" id="PRO_0000041712" description="Removed in mature form" evidence="1">
    <location>
        <begin position="351"/>
        <end position="424"/>
    </location>
</feature>
<feature type="topological domain" description="Extracellular" evidence="5">
    <location>
        <begin position="23"/>
        <end position="387"/>
    </location>
</feature>
<feature type="transmembrane region" description="Helical" evidence="5">
    <location>
        <begin position="388"/>
        <end position="408"/>
    </location>
</feature>
<feature type="topological domain" description="Cytoplasmic" evidence="5">
    <location>
        <begin position="409"/>
        <end position="424"/>
    </location>
</feature>
<feature type="domain" description="ZP" evidence="6">
    <location>
        <begin position="45"/>
        <end position="307"/>
    </location>
</feature>
<feature type="modified residue" description="Pyrrolidone carboxylic acid" evidence="3">
    <location>
        <position position="23"/>
    </location>
</feature>
<feature type="glycosylation site" description="N-linked (GlcNAc...) asparagine" evidence="1">
    <location>
        <position position="125"/>
    </location>
</feature>
<feature type="glycosylation site" description="N-linked (GlcNAc...) asparagine" evidence="1">
    <location>
        <position position="147"/>
    </location>
</feature>
<feature type="glycosylation site" description="O-linked (GalNAc...) threonine" evidence="1">
    <location>
        <position position="156"/>
    </location>
</feature>
<feature type="glycosylation site" description="O-linked (GalNAc...) threonine" evidence="1">
    <location>
        <position position="162"/>
    </location>
</feature>
<feature type="glycosylation site" description="O-linked (GalNAc...) threonine" evidence="1">
    <location>
        <position position="163"/>
    </location>
</feature>
<feature type="glycosylation site" description="N-linked (GlcNAc...) asparagine" evidence="1">
    <location>
        <position position="272"/>
    </location>
</feature>
<feature type="disulfide bond" evidence="1">
    <location>
        <begin position="46"/>
        <end position="140"/>
    </location>
</feature>
<feature type="disulfide bond" evidence="1">
    <location>
        <begin position="78"/>
        <end position="99"/>
    </location>
</feature>
<feature type="disulfide bond" evidence="1">
    <location>
        <begin position="217"/>
        <end position="282"/>
    </location>
</feature>
<feature type="disulfide bond" evidence="1">
    <location>
        <begin position="239"/>
        <end position="300"/>
    </location>
</feature>
<comment type="function">
    <text>Component of the zona pellucida, an extracellular matrix surrounding oocytes which mediates sperm binding, induction of the acrosome reaction and prevents post-fertilization polyspermy. The zona pellucida is composed of 3 to 4 glycoproteins, ZP1, ZP2, ZP3, and ZP4. ZP3 is essential for sperm binding and zona matrix formation.</text>
</comment>
<comment type="subunit">
    <text evidence="2 3">Polymers of ZP2 and ZP3 organized into long filaments cross-linked by ZP1 homodimers. Interacts with ZP1 and ZP2.</text>
</comment>
<comment type="subcellular location">
    <molecule>Processed zona pellucida sperm-binding protein 3</molecule>
    <subcellularLocation>
        <location evidence="3">Zona pellucida</location>
    </subcellularLocation>
</comment>
<comment type="subcellular location">
    <subcellularLocation>
        <location evidence="4">Cell membrane</location>
        <topology evidence="5">Single-pass type I membrane protein</topology>
    </subcellularLocation>
</comment>
<comment type="tissue specificity">
    <text>Expressed in oocytes.</text>
</comment>
<comment type="domain">
    <text>The ZP domain is involved in the polymerization of the ZP proteins to form the zona pellucida.</text>
</comment>
<comment type="PTM">
    <text>Proteolytically cleaved before the transmembrane segment to yield the secreted ectodomain incorporated in the zona pellucida.</text>
</comment>
<comment type="PTM">
    <text evidence="1">N-glycosylated.</text>
</comment>
<comment type="PTM">
    <text evidence="1">O-glycosylated; removal of O-linked glycans may play an important role in the post-fertilization block to polyspermy.</text>
</comment>
<comment type="similarity">
    <text evidence="7">Belongs to the ZP domain family. ZPC subfamily.</text>
</comment>
<comment type="online information" name="Protein Spotlight">
    <link uri="https://www.proteinspotlight.org/back_issues/093"/>
    <text>Molecular chastity - Issue 93 of April 2008</text>
</comment>
<sequence>MELSYRLFICLLLWGSTELCYPQPFWLLQGGASRAETSVQPVLVECREATLLVTVSKDLFGTGKLIRAADLTLGPEACEPLVSMDTEDVVRFEVGLHECGSSMQVTDDALVYSTFLLHDPRPVGNLSIVRTNRAEIPIECRYPRQGNVSSQAILPTWLPFRTTVFSEEKLTFSLRLMEENWNAEKRSPTFHLGDAAHLQAEIHTGSHVPLRLFVDHCVATPTPDQNASPYHTIVDFHGCLVDGLTDASSAFKVPRPGPDTLQFTVDVFHFANDSRNMIYITCHLKAIPAEQEPDELNKACSFSKSSNSWFPVEGPADICQCCSKGDCGTPSHSRRQPHVVSQWSRSASRNRRHVTEEADITVGPLIFLDRSADYEVEQWALPADTSVLLLGIGLAVVASLTLTAVILIFTRRWRTASRPVSASE</sequence>
<protein>
    <recommendedName>
        <fullName>Zona pellucida sperm-binding protein 3</fullName>
    </recommendedName>
    <alternativeName>
        <fullName>Sperm receptor</fullName>
    </alternativeName>
    <alternativeName>
        <fullName>Zona pellucida glycoprotein 3</fullName>
        <shortName>Zp-3</shortName>
    </alternativeName>
    <alternativeName>
        <fullName>Zona pellucida protein C</fullName>
    </alternativeName>
    <component>
        <recommendedName>
            <fullName>Processed zona pellucida sperm-binding protein 3</fullName>
        </recommendedName>
    </component>
</protein>
<gene>
    <name type="primary">ZP3</name>
    <name type="synonym">ZPC</name>
</gene>
<keyword id="KW-1003">Cell membrane</keyword>
<keyword id="KW-0165">Cleavage on pair of basic residues</keyword>
<keyword id="KW-1015">Disulfide bond</keyword>
<keyword id="KW-0272">Extracellular matrix</keyword>
<keyword id="KW-0278">Fertilization</keyword>
<keyword id="KW-0325">Glycoprotein</keyword>
<keyword id="KW-0472">Membrane</keyword>
<keyword id="KW-0873">Pyrrolidone carboxylic acid</keyword>
<keyword id="KW-0675">Receptor</keyword>
<keyword id="KW-0964">Secreted</keyword>
<keyword id="KW-0732">Signal</keyword>
<keyword id="KW-0812">Transmembrane</keyword>
<keyword id="KW-1133">Transmembrane helix</keyword>
<name>ZP3_MACRA</name>
<reference key="1">
    <citation type="journal article" date="1995" name="Reprod. Fertil. Dev.">
        <title>Nucleotide sequence of cDNA encoding bonnet monkey (Macaca radiata) zona pellucida glycoprotein-ZP3.</title>
        <authorList>
            <person name="Kolluri S.K."/>
            <person name="Kaul R."/>
            <person name="Banerjee K."/>
            <person name="Gupta S.K."/>
        </authorList>
    </citation>
    <scope>NUCLEOTIDE SEQUENCE [MRNA]</scope>
    <source>
        <tissue>Ovary</tissue>
    </source>
</reference>
<dbReference type="EMBL" id="X82639">
    <property type="protein sequence ID" value="CAA57961.1"/>
    <property type="molecule type" value="mRNA"/>
</dbReference>
<dbReference type="SMR" id="P53785"/>
<dbReference type="GlyCosmos" id="P53785">
    <property type="glycosylation" value="6 sites, No reported glycans"/>
</dbReference>
<dbReference type="GO" id="GO:0062023">
    <property type="term" value="C:collagen-containing extracellular matrix"/>
    <property type="evidence" value="ECO:0000250"/>
    <property type="project" value="UniProtKB"/>
</dbReference>
<dbReference type="GO" id="GO:0035805">
    <property type="term" value="C:egg coat"/>
    <property type="evidence" value="ECO:0000250"/>
    <property type="project" value="UniProtKB"/>
</dbReference>
<dbReference type="GO" id="GO:0005615">
    <property type="term" value="C:extracellular space"/>
    <property type="evidence" value="ECO:0000250"/>
    <property type="project" value="UniProtKB"/>
</dbReference>
<dbReference type="GO" id="GO:0005886">
    <property type="term" value="C:plasma membrane"/>
    <property type="evidence" value="ECO:0000250"/>
    <property type="project" value="UniProtKB"/>
</dbReference>
<dbReference type="GO" id="GO:0032190">
    <property type="term" value="F:acrosin binding"/>
    <property type="evidence" value="ECO:0007669"/>
    <property type="project" value="TreeGrafter"/>
</dbReference>
<dbReference type="GO" id="GO:0030246">
    <property type="term" value="F:carbohydrate binding"/>
    <property type="evidence" value="ECO:0000250"/>
    <property type="project" value="UniProtKB"/>
</dbReference>
<dbReference type="GO" id="GO:0048018">
    <property type="term" value="F:receptor ligand activity"/>
    <property type="evidence" value="ECO:0000250"/>
    <property type="project" value="UniProtKB"/>
</dbReference>
<dbReference type="GO" id="GO:0035804">
    <property type="term" value="F:structural constituent of egg coat"/>
    <property type="evidence" value="ECO:0000250"/>
    <property type="project" value="UniProtKB"/>
</dbReference>
<dbReference type="GO" id="GO:0007339">
    <property type="term" value="P:binding of sperm to zona pellucida"/>
    <property type="evidence" value="ECO:0000250"/>
    <property type="project" value="UniProtKB"/>
</dbReference>
<dbReference type="GO" id="GO:0001825">
    <property type="term" value="P:blastocyst formation"/>
    <property type="evidence" value="ECO:0000250"/>
    <property type="project" value="UniProtKB"/>
</dbReference>
<dbReference type="GO" id="GO:0035803">
    <property type="term" value="P:egg coat formation"/>
    <property type="evidence" value="ECO:0000250"/>
    <property type="project" value="UniProtKB"/>
</dbReference>
<dbReference type="GO" id="GO:0002455">
    <property type="term" value="P:humoral immune response mediated by circulating immunoglobulin"/>
    <property type="evidence" value="ECO:0000250"/>
    <property type="project" value="UniProtKB"/>
</dbReference>
<dbReference type="GO" id="GO:2000360">
    <property type="term" value="P:negative regulation of binding of sperm to zona pellucida"/>
    <property type="evidence" value="ECO:0000250"/>
    <property type="project" value="UniProtKB"/>
</dbReference>
<dbReference type="GO" id="GO:0045892">
    <property type="term" value="P:negative regulation of DNA-templated transcription"/>
    <property type="evidence" value="ECO:0000250"/>
    <property type="project" value="UniProtKB"/>
</dbReference>
<dbReference type="GO" id="GO:0048599">
    <property type="term" value="P:oocyte development"/>
    <property type="evidence" value="ECO:0000250"/>
    <property type="project" value="UniProtKB"/>
</dbReference>
<dbReference type="GO" id="GO:2000368">
    <property type="term" value="P:positive regulation of acrosomal vesicle exocytosis"/>
    <property type="evidence" value="ECO:0000250"/>
    <property type="project" value="UniProtKB"/>
</dbReference>
<dbReference type="GO" id="GO:2000344">
    <property type="term" value="P:positive regulation of acrosome reaction"/>
    <property type="evidence" value="ECO:0000250"/>
    <property type="project" value="UniProtKB"/>
</dbReference>
<dbReference type="GO" id="GO:2000388">
    <property type="term" value="P:positive regulation of antral ovarian follicle growth"/>
    <property type="evidence" value="ECO:0000250"/>
    <property type="project" value="UniProtKB"/>
</dbReference>
<dbReference type="GO" id="GO:0045893">
    <property type="term" value="P:positive regulation of DNA-templated transcription"/>
    <property type="evidence" value="ECO:0000250"/>
    <property type="project" value="UniProtKB"/>
</dbReference>
<dbReference type="GO" id="GO:0002922">
    <property type="term" value="P:positive regulation of humoral immune response"/>
    <property type="evidence" value="ECO:0000250"/>
    <property type="project" value="UniProtKB"/>
</dbReference>
<dbReference type="GO" id="GO:0050729">
    <property type="term" value="P:positive regulation of inflammatory response"/>
    <property type="evidence" value="ECO:0000250"/>
    <property type="project" value="UniProtKB"/>
</dbReference>
<dbReference type="GO" id="GO:0032753">
    <property type="term" value="P:positive regulation of interleukin-4 production"/>
    <property type="evidence" value="ECO:0000250"/>
    <property type="project" value="UniProtKB"/>
</dbReference>
<dbReference type="GO" id="GO:0002687">
    <property type="term" value="P:positive regulation of leukocyte migration"/>
    <property type="evidence" value="ECO:0000250"/>
    <property type="project" value="UniProtKB"/>
</dbReference>
<dbReference type="GO" id="GO:2000386">
    <property type="term" value="P:positive regulation of ovarian follicle development"/>
    <property type="evidence" value="ECO:0000250"/>
    <property type="project" value="UniProtKB"/>
</dbReference>
<dbReference type="GO" id="GO:0042102">
    <property type="term" value="P:positive regulation of T cell proliferation"/>
    <property type="evidence" value="ECO:0000250"/>
    <property type="project" value="UniProtKB"/>
</dbReference>
<dbReference type="GO" id="GO:0032729">
    <property type="term" value="P:positive regulation of type II interferon production"/>
    <property type="evidence" value="ECO:0000250"/>
    <property type="project" value="UniProtKB"/>
</dbReference>
<dbReference type="GO" id="GO:0001809">
    <property type="term" value="P:positive regulation of type IV hypersensitivity"/>
    <property type="evidence" value="ECO:0000250"/>
    <property type="project" value="UniProtKB"/>
</dbReference>
<dbReference type="FunFam" id="2.60.40.3210:FF:000001">
    <property type="entry name" value="Zona pellucida sperm-binding protein 3"/>
    <property type="match status" value="1"/>
</dbReference>
<dbReference type="FunFam" id="2.60.40.4100:FF:000002">
    <property type="entry name" value="Zona pellucida sperm-binding protein 3"/>
    <property type="match status" value="1"/>
</dbReference>
<dbReference type="Gene3D" id="2.60.40.4100">
    <property type="entry name" value="Zona pellucida, ZP-C domain"/>
    <property type="match status" value="1"/>
</dbReference>
<dbReference type="Gene3D" id="2.60.40.3210">
    <property type="entry name" value="Zona pellucida, ZP-N domain"/>
    <property type="match status" value="1"/>
</dbReference>
<dbReference type="InterPro" id="IPR055355">
    <property type="entry name" value="ZP-C"/>
</dbReference>
<dbReference type="InterPro" id="IPR042235">
    <property type="entry name" value="ZP-C_dom"/>
</dbReference>
<dbReference type="InterPro" id="IPR055356">
    <property type="entry name" value="ZP-N"/>
</dbReference>
<dbReference type="InterPro" id="IPR048290">
    <property type="entry name" value="ZP_chr"/>
</dbReference>
<dbReference type="InterPro" id="IPR001507">
    <property type="entry name" value="ZP_dom"/>
</dbReference>
<dbReference type="InterPro" id="IPR017977">
    <property type="entry name" value="ZP_dom_CS"/>
</dbReference>
<dbReference type="PANTHER" id="PTHR11576">
    <property type="entry name" value="ZONA PELLUCIDA SPERM-BINDING PROTEIN 3"/>
    <property type="match status" value="1"/>
</dbReference>
<dbReference type="PANTHER" id="PTHR11576:SF2">
    <property type="entry name" value="ZONA PELLUCIDA SPERM-BINDING PROTEIN 3"/>
    <property type="match status" value="1"/>
</dbReference>
<dbReference type="Pfam" id="PF00100">
    <property type="entry name" value="Zona_pellucida"/>
    <property type="match status" value="1"/>
</dbReference>
<dbReference type="Pfam" id="PF23344">
    <property type="entry name" value="ZP-N"/>
    <property type="match status" value="1"/>
</dbReference>
<dbReference type="PRINTS" id="PR00023">
    <property type="entry name" value="ZPELLUCIDA"/>
</dbReference>
<dbReference type="SMART" id="SM00241">
    <property type="entry name" value="ZP"/>
    <property type="match status" value="1"/>
</dbReference>
<dbReference type="PROSITE" id="PS00682">
    <property type="entry name" value="ZP_1"/>
    <property type="match status" value="1"/>
</dbReference>
<dbReference type="PROSITE" id="PS51034">
    <property type="entry name" value="ZP_2"/>
    <property type="match status" value="1"/>
</dbReference>